<organism>
    <name type="scientific">Enterobacteria phage SP</name>
    <name type="common">Bacteriophage SP</name>
    <dbReference type="NCBI Taxonomy" id="12027"/>
    <lineage>
        <taxon>Viruses</taxon>
        <taxon>Riboviria</taxon>
        <taxon>Orthornavirae</taxon>
        <taxon>Lenarviricota</taxon>
        <taxon>Leviviricetes</taxon>
        <taxon>Norzivirales</taxon>
        <taxon>Fiersviridae</taxon>
        <taxon>Qubevirus</taxon>
        <taxon>Qubevirus faecium</taxon>
    </lineage>
</organism>
<organismHost>
    <name type="scientific">Escherichia coli</name>
    <dbReference type="NCBI Taxonomy" id="562"/>
</organismHost>
<proteinExistence type="evidence at transcript level"/>
<reference key="1">
    <citation type="journal article" date="1988" name="Nucleic Acids Res.">
        <title>Analysis of the complete nucleotide sequence of the group IV RNA coliphage SP.</title>
        <authorList>
            <person name="Hirashima A."/>
            <person name="Hirose T."/>
            <person name="Inayama S."/>
            <person name="Inokuchi Y."/>
            <person name="Jacobson A.B."/>
        </authorList>
    </citation>
    <scope>NUCLEOTIDE SEQUENCE [MRNA]</scope>
</reference>
<dbReference type="EMBL" id="X07489">
    <property type="protein sequence ID" value="CAA30374.1"/>
    <property type="molecule type" value="mRNA"/>
</dbReference>
<dbReference type="RefSeq" id="NP_695027.1">
    <property type="nucleotide sequence ID" value="NC_004301.1"/>
</dbReference>
<dbReference type="SMR" id="P09673"/>
<dbReference type="GeneID" id="955457"/>
<dbReference type="KEGG" id="vg:955457"/>
<dbReference type="Proteomes" id="UP000000728">
    <property type="component" value="Genome"/>
</dbReference>
<dbReference type="GO" id="GO:0039617">
    <property type="term" value="C:T=3 icosahedral viral capsid"/>
    <property type="evidence" value="ECO:0007669"/>
    <property type="project" value="UniProtKB-KW"/>
</dbReference>
<dbReference type="GO" id="GO:0003723">
    <property type="term" value="F:RNA binding"/>
    <property type="evidence" value="ECO:0007669"/>
    <property type="project" value="UniProtKB-KW"/>
</dbReference>
<dbReference type="GO" id="GO:0005198">
    <property type="term" value="F:structural molecule activity"/>
    <property type="evidence" value="ECO:0007669"/>
    <property type="project" value="InterPro"/>
</dbReference>
<dbReference type="GO" id="GO:0006417">
    <property type="term" value="P:regulation of translation"/>
    <property type="evidence" value="ECO:0007669"/>
    <property type="project" value="UniProtKB-KW"/>
</dbReference>
<dbReference type="Gene3D" id="3.30.380.10">
    <property type="entry name" value="MS2 Viral Coat Protein"/>
    <property type="match status" value="1"/>
</dbReference>
<dbReference type="InterPro" id="IPR002703">
    <property type="entry name" value="Levivir_coat"/>
</dbReference>
<dbReference type="InterPro" id="IPR015954">
    <property type="entry name" value="Phage_RNA-type_capsid"/>
</dbReference>
<dbReference type="Pfam" id="PF01819">
    <property type="entry name" value="Levi_coat"/>
    <property type="match status" value="1"/>
</dbReference>
<dbReference type="SUPFAM" id="SSF55405">
    <property type="entry name" value="RNA bacteriophage capsid protein"/>
    <property type="match status" value="1"/>
</dbReference>
<keyword id="KW-0167">Capsid protein</keyword>
<keyword id="KW-1185">Reference proteome</keyword>
<keyword id="KW-0694">RNA-binding</keyword>
<keyword id="KW-1142">T=3 icosahedral capsid protein</keyword>
<keyword id="KW-0810">Translation regulation</keyword>
<keyword id="KW-0946">Virion</keyword>
<accession>P09673</accession>
<protein>
    <recommendedName>
        <fullName>Capsid protein</fullName>
        <shortName>CP</shortName>
    </recommendedName>
    <alternativeName>
        <fullName>Coat protein</fullName>
    </alternativeName>
</protein>
<feature type="initiator methionine" description="Removed; by host" evidence="1">
    <location>
        <position position="1"/>
    </location>
</feature>
<feature type="chain" id="PRO_0000164849" description="Capsid protein">
    <location>
        <begin position="2"/>
        <end position="132"/>
    </location>
</feature>
<sequence length="132" mass="14129">MAKLNQVTLSKIGKNGDQTLTLTPRGVNPTNGVASLSEAGAVPALEKRVTVSVAQPSRNRKNFKVQIKLQNPTACTRDACDPSVTRSAFADVTLSFTSYSTDEERALIRTELAALLADPLIVDAIDNLNPAY</sequence>
<evidence type="ECO:0000250" key="1">
    <source>
        <dbReference type="UniProtKB" id="P03615"/>
    </source>
</evidence>
<evidence type="ECO:0000305" key="2"/>
<name>CAPSD_BPSP</name>
<comment type="function">
    <text evidence="1">Capsid protein self-assembles to form an icosahedral capsid with a T=3 symmetry, about 26 nm in diameter, and consisting of 89 capsid proteins dimers (178 capsid proteins). Involved in viral genome encapsidation through the interaction between a capsid protein dimer and the multiple packaging signals present in the RNA genome. Binding of the capsid proteins to the viral RNA induces a conformational change required for efficient T=3 shell formation. The capsid also contains 1 copy of the A2 maturation protein.</text>
</comment>
<comment type="function">
    <text evidence="1">Acts as a translational repressor of viral replicase synthesis late in infection. This latter function is the result of capsid protein interaction with an RNA hairpin which contains the replicase ribosome-binding site.</text>
</comment>
<comment type="subunit">
    <text evidence="1">Homodimer. The capsid protein dimer binds to the viral RNA via an operator hairpin, but also many other RNA sequences in the viral genome.</text>
</comment>
<comment type="subcellular location">
    <subcellularLocation>
        <location evidence="1">Virion</location>
    </subcellularLocation>
    <text evidence="1">The shell is composed of 89 dimers of the capsid protein and 1 copy of the maturation protein.</text>
</comment>
<comment type="similarity">
    <text evidence="2">Belongs to the Leviviricetes capsid protein family.</text>
</comment>